<accession>P70225</accession>
<accession>A2RTL4</accession>
<accession>B1AXR8</accession>
<accession>O09074</accession>
<accession>Q78DW8</accession>
<evidence type="ECO:0000250" key="1"/>
<evidence type="ECO:0000255" key="2"/>
<evidence type="ECO:0000255" key="3">
    <source>
        <dbReference type="PROSITE-ProRule" id="PRU00114"/>
    </source>
</evidence>
<evidence type="ECO:0000255" key="4">
    <source>
        <dbReference type="PROSITE-ProRule" id="PRU00316"/>
    </source>
</evidence>
<evidence type="ECO:0000256" key="5">
    <source>
        <dbReference type="SAM" id="MobiDB-lite"/>
    </source>
</evidence>
<evidence type="ECO:0000269" key="6">
    <source>
    </source>
</evidence>
<evidence type="ECO:0000305" key="7"/>
<comment type="function">
    <text>Receptor for interleukin-11. The receptor systems for IL6, LIF, OSM, CNTF, IL11 and CT1 can utilize IL6ST for initiating signal transmission. The IL11/IL11RA/IL6ST complex may be involved in the control of proliferation and/or differentiation of skeletogenic progenitor or other mesenchymal cells.</text>
</comment>
<comment type="subunit">
    <text evidence="1">On ligand binding, forms a multimer complex with IL6ST/gp130.</text>
</comment>
<comment type="subcellular location">
    <subcellularLocation>
        <location>Membrane</location>
        <topology>Single-pass type I membrane protein</topology>
    </subcellularLocation>
</comment>
<comment type="tissue specificity">
    <text evidence="6">Expression restricted to testis, lymph node and thymus. Highest level in testis.</text>
</comment>
<comment type="miscellaneous">
    <text>Il11ra2 appears to arise through gene duplication of ancestral origin and has been lost in some inbred mouse strains.</text>
</comment>
<comment type="similarity">
    <text evidence="7">Belongs to the type I cytokine receptor family. Type 3 subfamily.</text>
</comment>
<dbReference type="EMBL" id="X94157">
    <property type="protein sequence ID" value="CAA63872.1"/>
    <property type="molecule type" value="Genomic_DNA"/>
</dbReference>
<dbReference type="EMBL" id="X94158">
    <property type="protein sequence ID" value="CAA63872.1"/>
    <property type="status" value="JOINED"/>
    <property type="molecule type" value="Genomic_DNA"/>
</dbReference>
<dbReference type="EMBL" id="X94159">
    <property type="protein sequence ID" value="CAA63872.1"/>
    <property type="status" value="JOINED"/>
    <property type="molecule type" value="Genomic_DNA"/>
</dbReference>
<dbReference type="EMBL" id="X94160">
    <property type="protein sequence ID" value="CAA63872.1"/>
    <property type="status" value="JOINED"/>
    <property type="molecule type" value="Genomic_DNA"/>
</dbReference>
<dbReference type="EMBL" id="X94161">
    <property type="protein sequence ID" value="CAA63872.1"/>
    <property type="status" value="JOINED"/>
    <property type="molecule type" value="Genomic_DNA"/>
</dbReference>
<dbReference type="EMBL" id="X98519">
    <property type="protein sequence ID" value="CAA67144.1"/>
    <property type="molecule type" value="mRNA"/>
</dbReference>
<dbReference type="EMBL" id="U69491">
    <property type="protein sequence ID" value="AAC53114.1"/>
    <property type="molecule type" value="mRNA"/>
</dbReference>
<dbReference type="EMBL" id="AL824709">
    <property type="status" value="NOT_ANNOTATED_CDS"/>
    <property type="molecule type" value="Genomic_DNA"/>
</dbReference>
<dbReference type="EMBL" id="BC132549">
    <property type="protein sequence ID" value="AAI32550.1"/>
    <property type="molecule type" value="mRNA"/>
</dbReference>
<dbReference type="EMBL" id="BC138592">
    <property type="protein sequence ID" value="AAI38593.1"/>
    <property type="molecule type" value="mRNA"/>
</dbReference>
<dbReference type="EMBL" id="BC145341">
    <property type="protein sequence ID" value="AAI45342.1"/>
    <property type="molecule type" value="mRNA"/>
</dbReference>
<dbReference type="CCDS" id="CCDS38735.1"/>
<dbReference type="RefSeq" id="NP_001094066.1">
    <property type="nucleotide sequence ID" value="NM_001100596.1"/>
</dbReference>
<dbReference type="RefSeq" id="NP_001390760.1">
    <property type="nucleotide sequence ID" value="NM_001403831.1"/>
</dbReference>
<dbReference type="RefSeq" id="NP_034680.3">
    <property type="nucleotide sequence ID" value="NM_010550.3"/>
</dbReference>
<dbReference type="SMR" id="P70225"/>
<dbReference type="FunCoup" id="P70225">
    <property type="interactions" value="413"/>
</dbReference>
<dbReference type="STRING" id="10090.ENSMUSP00000095725"/>
<dbReference type="GlyCosmos" id="P70225">
    <property type="glycosylation" value="2 sites, No reported glycans"/>
</dbReference>
<dbReference type="GlyGen" id="P70225">
    <property type="glycosylation" value="2 sites, 1 N-linked glycan (1 site)"/>
</dbReference>
<dbReference type="PaxDb" id="10090-ENSMUSP00000095725"/>
<dbReference type="DNASU" id="16158"/>
<dbReference type="Ensembl" id="ENSMUST00000098121.4">
    <property type="protein sequence ID" value="ENSMUSP00000095725.4"/>
    <property type="gene ID" value="ENSMUSG00000073876.4"/>
</dbReference>
<dbReference type="Ensembl" id="ENSMUST00000108006.4">
    <property type="protein sequence ID" value="ENSMUSP00000103641.4"/>
    <property type="gene ID" value="ENSMUSG00000078735.5"/>
</dbReference>
<dbReference type="Ensembl" id="ENSMUST00000238770.2">
    <property type="protein sequence ID" value="ENSMUSP00000158819.2"/>
    <property type="gene ID" value="ENSMUSG00000078735.5"/>
</dbReference>
<dbReference type="GeneID" id="16158"/>
<dbReference type="KEGG" id="mmu:100042555"/>
<dbReference type="KEGG" id="mmu:16158"/>
<dbReference type="UCSC" id="uc008slo.1">
    <property type="organism name" value="mouse"/>
</dbReference>
<dbReference type="AGR" id="MGI:109123"/>
<dbReference type="AGR" id="MGI:3801997"/>
<dbReference type="CTD" id="100042555"/>
<dbReference type="CTD" id="16158"/>
<dbReference type="MGI" id="MGI:109123">
    <property type="gene designation" value="Il11ra2"/>
</dbReference>
<dbReference type="VEuPathDB" id="HostDB:ENSMUSG00000073876"/>
<dbReference type="VEuPathDB" id="HostDB:ENSMUSG00000078735"/>
<dbReference type="VEuPathDB" id="HostDB:ENSMUSG00000095456"/>
<dbReference type="VEuPathDB" id="HostDB:ENSMUSG00000095623"/>
<dbReference type="eggNOG" id="ENOG502R7G6">
    <property type="taxonomic scope" value="Eukaryota"/>
</dbReference>
<dbReference type="GeneTree" id="ENSGT00940000160904"/>
<dbReference type="HOGENOM" id="CLU_047259_0_1_1"/>
<dbReference type="InParanoid" id="P70225"/>
<dbReference type="OMA" id="NFYRISC"/>
<dbReference type="OrthoDB" id="418412at2759"/>
<dbReference type="PhylomeDB" id="P70225"/>
<dbReference type="TreeFam" id="TF331210"/>
<dbReference type="BioGRID-ORCS" id="100038993">
    <property type="hits" value="0 hits in 11 CRISPR screens"/>
</dbReference>
<dbReference type="BioGRID-ORCS" id="100042555">
    <property type="hits" value="0 hits in 16 CRISPR screens"/>
</dbReference>
<dbReference type="BioGRID-ORCS" id="16158">
    <property type="hits" value="1 hit in 21 CRISPR screens"/>
</dbReference>
<dbReference type="ChiTaRS" id="Il11ra2">
    <property type="organism name" value="mouse"/>
</dbReference>
<dbReference type="PRO" id="PR:P70225"/>
<dbReference type="Proteomes" id="UP000000589">
    <property type="component" value="Chromosome 4"/>
</dbReference>
<dbReference type="RNAct" id="P70225">
    <property type="molecule type" value="protein"/>
</dbReference>
<dbReference type="Bgee" id="ENSMUSG00000073876">
    <property type="expression patterns" value="Expressed in spermatocyte and 46 other cell types or tissues"/>
</dbReference>
<dbReference type="GO" id="GO:0016020">
    <property type="term" value="C:membrane"/>
    <property type="evidence" value="ECO:0007669"/>
    <property type="project" value="UniProtKB-SubCell"/>
</dbReference>
<dbReference type="GO" id="GO:0004896">
    <property type="term" value="F:cytokine receptor activity"/>
    <property type="evidence" value="ECO:0007669"/>
    <property type="project" value="InterPro"/>
</dbReference>
<dbReference type="CDD" id="cd00063">
    <property type="entry name" value="FN3"/>
    <property type="match status" value="1"/>
</dbReference>
<dbReference type="FunFam" id="2.60.40.10:FF:000136">
    <property type="entry name" value="Ciliary neurotrophic factor receptor alpha"/>
    <property type="match status" value="1"/>
</dbReference>
<dbReference type="FunFam" id="2.60.40.10:FF:000545">
    <property type="entry name" value="Interleukin-11 receptor subunit alpha"/>
    <property type="match status" value="1"/>
</dbReference>
<dbReference type="Gene3D" id="2.60.40.10">
    <property type="entry name" value="Immunoglobulins"/>
    <property type="match status" value="3"/>
</dbReference>
<dbReference type="InterPro" id="IPR003961">
    <property type="entry name" value="FN3_dom"/>
</dbReference>
<dbReference type="InterPro" id="IPR036116">
    <property type="entry name" value="FN3_sf"/>
</dbReference>
<dbReference type="InterPro" id="IPR003530">
    <property type="entry name" value="Hematopoietin_rcpt_L_F3_CS"/>
</dbReference>
<dbReference type="InterPro" id="IPR007110">
    <property type="entry name" value="Ig-like_dom"/>
</dbReference>
<dbReference type="InterPro" id="IPR036179">
    <property type="entry name" value="Ig-like_dom_sf"/>
</dbReference>
<dbReference type="InterPro" id="IPR013783">
    <property type="entry name" value="Ig-like_fold"/>
</dbReference>
<dbReference type="InterPro" id="IPR003599">
    <property type="entry name" value="Ig_sub"/>
</dbReference>
<dbReference type="InterPro" id="IPR053073">
    <property type="entry name" value="IL11/IL27_subunit_beta"/>
</dbReference>
<dbReference type="PANTHER" id="PTHR48483">
    <property type="entry name" value="INTERLEUKIN-27 SUBUNIT BETA"/>
    <property type="match status" value="1"/>
</dbReference>
<dbReference type="PANTHER" id="PTHR48483:SF2">
    <property type="entry name" value="INTERLEUKIN-27 SUBUNIT BETA"/>
    <property type="match status" value="1"/>
</dbReference>
<dbReference type="SMART" id="SM00060">
    <property type="entry name" value="FN3"/>
    <property type="match status" value="2"/>
</dbReference>
<dbReference type="SMART" id="SM00409">
    <property type="entry name" value="IG"/>
    <property type="match status" value="1"/>
</dbReference>
<dbReference type="SUPFAM" id="SSF49265">
    <property type="entry name" value="Fibronectin type III"/>
    <property type="match status" value="2"/>
</dbReference>
<dbReference type="SUPFAM" id="SSF48726">
    <property type="entry name" value="Immunoglobulin"/>
    <property type="match status" value="1"/>
</dbReference>
<dbReference type="PROSITE" id="PS50853">
    <property type="entry name" value="FN3"/>
    <property type="match status" value="2"/>
</dbReference>
<dbReference type="PROSITE" id="PS01354">
    <property type="entry name" value="HEMATOPO_REC_L_F3"/>
    <property type="match status" value="1"/>
</dbReference>
<dbReference type="PROSITE" id="PS50835">
    <property type="entry name" value="IG_LIKE"/>
    <property type="match status" value="1"/>
</dbReference>
<keyword id="KW-1015">Disulfide bond</keyword>
<keyword id="KW-0325">Glycoprotein</keyword>
<keyword id="KW-0393">Immunoglobulin domain</keyword>
<keyword id="KW-0472">Membrane</keyword>
<keyword id="KW-0675">Receptor</keyword>
<keyword id="KW-1185">Reference proteome</keyword>
<keyword id="KW-0677">Repeat</keyword>
<keyword id="KW-0732">Signal</keyword>
<keyword id="KW-0812">Transmembrane</keyword>
<keyword id="KW-1133">Transmembrane helix</keyword>
<feature type="signal peptide" evidence="1">
    <location>
        <begin position="1"/>
        <end position="23"/>
    </location>
</feature>
<feature type="chain" id="PRO_0000010915" description="Interleukin-11 receptor subunit alpha-2">
    <location>
        <begin position="24"/>
        <end position="432"/>
    </location>
</feature>
<feature type="topological domain" description="Extracellular" evidence="2">
    <location>
        <begin position="24"/>
        <end position="372"/>
    </location>
</feature>
<feature type="transmembrane region" description="Helical" evidence="2">
    <location>
        <begin position="373"/>
        <end position="393"/>
    </location>
</feature>
<feature type="topological domain" description="Cytoplasmic" evidence="2">
    <location>
        <begin position="394"/>
        <end position="432"/>
    </location>
</feature>
<feature type="domain" description="Ig-like C2-type">
    <location>
        <begin position="27"/>
        <end position="110"/>
    </location>
</feature>
<feature type="domain" description="Fibronectin type-III 1" evidence="4">
    <location>
        <begin position="112"/>
        <end position="219"/>
    </location>
</feature>
<feature type="domain" description="Fibronectin type-III 2" evidence="4">
    <location>
        <begin position="220"/>
        <end position="317"/>
    </location>
</feature>
<feature type="region of interest" description="Disordered" evidence="5">
    <location>
        <begin position="151"/>
        <end position="170"/>
    </location>
</feature>
<feature type="short sequence motif" description="WSXWS motif">
    <location>
        <begin position="304"/>
        <end position="308"/>
    </location>
</feature>
<feature type="glycosylation site" description="N-linked (GlcNAc...) asparagine" evidence="2">
    <location>
        <position position="127"/>
    </location>
</feature>
<feature type="glycosylation site" description="N-linked (GlcNAc...) asparagine" evidence="2">
    <location>
        <position position="194"/>
    </location>
</feature>
<feature type="disulfide bond" evidence="3">
    <location>
        <begin position="48"/>
        <end position="94"/>
    </location>
</feature>
<feature type="disulfide bond" evidence="3">
    <location>
        <begin position="120"/>
        <end position="130"/>
    </location>
</feature>
<feature type="disulfide bond" evidence="3">
    <location>
        <begin position="170"/>
        <end position="180"/>
    </location>
</feature>
<feature type="sequence conflict" description="In Ref. 1; CAA67144, 3; AAC53114 and 5; AAI32550." evidence="7" ref="1 3 5">
    <original>P</original>
    <variation>S</variation>
    <location>
        <position position="200"/>
    </location>
</feature>
<feature type="sequence conflict" description="In Ref. 1; CAA63872." evidence="7" ref="1">
    <original>V</original>
    <variation>L</variation>
    <location>
        <position position="384"/>
    </location>
</feature>
<reference key="1">
    <citation type="journal article" date="1996" name="Biochem. J.">
        <title>Two differentially expressed interleukin-11 receptor genes in the mouse genome.</title>
        <authorList>
            <person name="Bilinski P."/>
            <person name="Hall M.A."/>
            <person name="Neuhaus H."/>
            <person name="Gissel C."/>
            <person name="Heath J.K."/>
            <person name="Gossler A."/>
        </authorList>
    </citation>
    <scope>NUCLEOTIDE SEQUENCE [GENOMIC DNA / MRNA]</scope>
    <source>
        <strain>CD-1</strain>
        <tissue>Testis</tissue>
    </source>
</reference>
<reference key="2">
    <citation type="journal article" date="1996" name="J. Biol. Chem.">
        <title>Structural analysis of the gene encoding the murine interleukin-11 receptor alpha-chain and a related locus.</title>
        <authorList>
            <person name="Robb L."/>
            <person name="Hilton D.J."/>
            <person name="Willson T.A."/>
            <person name="Begley C.G."/>
        </authorList>
    </citation>
    <scope>NUCLEOTIDE SEQUENCE [MRNA]</scope>
    <source>
        <strain>129/Sv</strain>
        <tissue>Testis</tissue>
    </source>
</reference>
<reference key="3">
    <citation type="journal article" date="1997" name="Genomics">
        <title>Identification of a second murine interleukin-11 receptor alpha-chain gene (IL11Ra2) with a restricted pattern of expression.</title>
        <authorList>
            <person name="Robb L."/>
            <person name="Hilton D.J."/>
            <person name="Brook-Carter P.T."/>
            <person name="Begley C.G."/>
        </authorList>
    </citation>
    <scope>NUCLEOTIDE SEQUENCE [MRNA]</scope>
    <scope>TISSUE SPECIFICITY</scope>
    <source>
        <strain>CD-1</strain>
        <tissue>Testis</tissue>
    </source>
</reference>
<reference key="4">
    <citation type="journal article" date="2009" name="PLoS Biol.">
        <title>Lineage-specific biology revealed by a finished genome assembly of the mouse.</title>
        <authorList>
            <person name="Church D.M."/>
            <person name="Goodstadt L."/>
            <person name="Hillier L.W."/>
            <person name="Zody M.C."/>
            <person name="Goldstein S."/>
            <person name="She X."/>
            <person name="Bult C.J."/>
            <person name="Agarwala R."/>
            <person name="Cherry J.L."/>
            <person name="DiCuccio M."/>
            <person name="Hlavina W."/>
            <person name="Kapustin Y."/>
            <person name="Meric P."/>
            <person name="Maglott D."/>
            <person name="Birtle Z."/>
            <person name="Marques A.C."/>
            <person name="Graves T."/>
            <person name="Zhou S."/>
            <person name="Teague B."/>
            <person name="Potamousis K."/>
            <person name="Churas C."/>
            <person name="Place M."/>
            <person name="Herschleb J."/>
            <person name="Runnheim R."/>
            <person name="Forrest D."/>
            <person name="Amos-Landgraf J."/>
            <person name="Schwartz D.C."/>
            <person name="Cheng Z."/>
            <person name="Lindblad-Toh K."/>
            <person name="Eichler E.E."/>
            <person name="Ponting C.P."/>
        </authorList>
    </citation>
    <scope>NUCLEOTIDE SEQUENCE [LARGE SCALE GENOMIC DNA]</scope>
    <source>
        <strain>C57BL/6J</strain>
    </source>
</reference>
<reference key="5">
    <citation type="journal article" date="2004" name="Genome Res.">
        <title>The status, quality, and expansion of the NIH full-length cDNA project: the Mammalian Gene Collection (MGC).</title>
        <authorList>
            <consortium name="The MGC Project Team"/>
        </authorList>
    </citation>
    <scope>NUCLEOTIDE SEQUENCE [LARGE SCALE MRNA]</scope>
    <source>
        <tissue>Brain</tissue>
    </source>
</reference>
<organism>
    <name type="scientific">Mus musculus</name>
    <name type="common">Mouse</name>
    <dbReference type="NCBI Taxonomy" id="10090"/>
    <lineage>
        <taxon>Eukaryota</taxon>
        <taxon>Metazoa</taxon>
        <taxon>Chordata</taxon>
        <taxon>Craniata</taxon>
        <taxon>Vertebrata</taxon>
        <taxon>Euteleostomi</taxon>
        <taxon>Mammalia</taxon>
        <taxon>Eutheria</taxon>
        <taxon>Euarchontoglires</taxon>
        <taxon>Glires</taxon>
        <taxon>Rodentia</taxon>
        <taxon>Myomorpha</taxon>
        <taxon>Muroidea</taxon>
        <taxon>Muridae</taxon>
        <taxon>Murinae</taxon>
        <taxon>Mus</taxon>
        <taxon>Mus</taxon>
    </lineage>
</organism>
<sequence>MSSSCSGLTRVLVAVATALVSSSSPCPQAWGPPGVQYGQPGRPVMLCCPGVSAGTPVSWFRDGDSRLLQGPDSGLGHRLVLAQVDSPDEGTYVCQTLDGVSGGMVTLKLGFPPARPEVSCQAVDYENFSCTWSPGQVSGLPTRYLTSYRKKTLPGAESQRESPSTGPWPCPQDPLEASRCVVHGAEFWSEYRINVTEVNPLGASTCLLDVRLQSILRPDPPQGLRVESVPGYPRRLHASWTYPASWRRQPHFLLKFRLQYRPAQHPAWSTVEPIGLEEVITDTVAGLPHAVRVSARDFLDAGTWSAWSPEAWGTPSTGLLQDEIPDWSQGHGQQLEAVVAQEDSLAPARPSLQPDPRPLDHRDPLEQVAVLASLGIFSCLGLAVGALALGLWLRLRRSGKEGPQKPGLLAPMIPVEKLPGIPNLQRTPENFS</sequence>
<name>I11RB_MOUSE</name>
<gene>
    <name type="primary">Il11ra2</name>
</gene>
<protein>
    <recommendedName>
        <fullName>Interleukin-11 receptor subunit alpha-2</fullName>
        <shortName>IL-11 receptor subunit alpha-2</shortName>
        <shortName>IL-11R subunit alpha-2</shortName>
        <shortName>IL-11R-alpha-2</shortName>
        <shortName>IL-11RA2</shortName>
    </recommendedName>
    <alternativeName>
        <fullName>Interleukin-11 receptor subunit beta</fullName>
        <shortName>IL-11 receptor subunit beta</shortName>
        <shortName>IL-11R subunit beta</shortName>
        <shortName>IL-11R-beta</shortName>
        <shortName>IL-11RB</shortName>
    </alternativeName>
</protein>
<proteinExistence type="evidence at transcript level"/>